<accession>Q9HXJ4</accession>
<comment type="function">
    <text evidence="1">Converts 2C-methyl-D-erythritol 2,4-cyclodiphosphate (ME-2,4cPP) into 1-hydroxy-2-methyl-2-(E)-butenyl 4-diphosphate.</text>
</comment>
<comment type="catalytic activity">
    <reaction evidence="1">
        <text>(2E)-4-hydroxy-3-methylbut-2-enyl diphosphate + oxidized [flavodoxin] + H2O + 2 H(+) = 2-C-methyl-D-erythritol 2,4-cyclic diphosphate + reduced [flavodoxin]</text>
        <dbReference type="Rhea" id="RHEA:43604"/>
        <dbReference type="Rhea" id="RHEA-COMP:10622"/>
        <dbReference type="Rhea" id="RHEA-COMP:10623"/>
        <dbReference type="ChEBI" id="CHEBI:15377"/>
        <dbReference type="ChEBI" id="CHEBI:15378"/>
        <dbReference type="ChEBI" id="CHEBI:57618"/>
        <dbReference type="ChEBI" id="CHEBI:58210"/>
        <dbReference type="ChEBI" id="CHEBI:58483"/>
        <dbReference type="ChEBI" id="CHEBI:128753"/>
        <dbReference type="EC" id="1.17.7.3"/>
    </reaction>
</comment>
<comment type="cofactor">
    <cofactor evidence="1">
        <name>[4Fe-4S] cluster</name>
        <dbReference type="ChEBI" id="CHEBI:49883"/>
    </cofactor>
    <text evidence="1">Binds 1 [4Fe-4S] cluster.</text>
</comment>
<comment type="pathway">
    <text evidence="1">Isoprenoid biosynthesis; isopentenyl diphosphate biosynthesis via DXP pathway; isopentenyl diphosphate from 1-deoxy-D-xylulose 5-phosphate: step 5/6.</text>
</comment>
<comment type="similarity">
    <text evidence="1">Belongs to the IspG family.</text>
</comment>
<feature type="chain" id="PRO_0000190618" description="4-hydroxy-3-methylbut-2-en-1-yl diphosphate synthase (flavodoxin)">
    <location>
        <begin position="1"/>
        <end position="371"/>
    </location>
</feature>
<feature type="binding site" evidence="1">
    <location>
        <position position="272"/>
    </location>
    <ligand>
        <name>[4Fe-4S] cluster</name>
        <dbReference type="ChEBI" id="CHEBI:49883"/>
    </ligand>
</feature>
<feature type="binding site" evidence="1">
    <location>
        <position position="275"/>
    </location>
    <ligand>
        <name>[4Fe-4S] cluster</name>
        <dbReference type="ChEBI" id="CHEBI:49883"/>
    </ligand>
</feature>
<feature type="binding site" evidence="1">
    <location>
        <position position="307"/>
    </location>
    <ligand>
        <name>[4Fe-4S] cluster</name>
        <dbReference type="ChEBI" id="CHEBI:49883"/>
    </ligand>
</feature>
<feature type="binding site" evidence="1">
    <location>
        <position position="314"/>
    </location>
    <ligand>
        <name>[4Fe-4S] cluster</name>
        <dbReference type="ChEBI" id="CHEBI:49883"/>
    </ligand>
</feature>
<name>ISPG_PSEAE</name>
<gene>
    <name evidence="1" type="primary">ispG</name>
    <name type="ordered locus">PA3803</name>
</gene>
<reference key="1">
    <citation type="journal article" date="2000" name="Nature">
        <title>Complete genome sequence of Pseudomonas aeruginosa PAO1, an opportunistic pathogen.</title>
        <authorList>
            <person name="Stover C.K."/>
            <person name="Pham X.-Q.T."/>
            <person name="Erwin A.L."/>
            <person name="Mizoguchi S.D."/>
            <person name="Warrener P."/>
            <person name="Hickey M.J."/>
            <person name="Brinkman F.S.L."/>
            <person name="Hufnagle W.O."/>
            <person name="Kowalik D.J."/>
            <person name="Lagrou M."/>
            <person name="Garber R.L."/>
            <person name="Goltry L."/>
            <person name="Tolentino E."/>
            <person name="Westbrock-Wadman S."/>
            <person name="Yuan Y."/>
            <person name="Brody L.L."/>
            <person name="Coulter S.N."/>
            <person name="Folger K.R."/>
            <person name="Kas A."/>
            <person name="Larbig K."/>
            <person name="Lim R.M."/>
            <person name="Smith K.A."/>
            <person name="Spencer D.H."/>
            <person name="Wong G.K.-S."/>
            <person name="Wu Z."/>
            <person name="Paulsen I.T."/>
            <person name="Reizer J."/>
            <person name="Saier M.H. Jr."/>
            <person name="Hancock R.E.W."/>
            <person name="Lory S."/>
            <person name="Olson M.V."/>
        </authorList>
    </citation>
    <scope>NUCLEOTIDE SEQUENCE [LARGE SCALE GENOMIC DNA]</scope>
    <source>
        <strain>ATCC 15692 / DSM 22644 / CIP 104116 / JCM 14847 / LMG 12228 / 1C / PRS 101 / PAO1</strain>
    </source>
</reference>
<protein>
    <recommendedName>
        <fullName evidence="1">4-hydroxy-3-methylbut-2-en-1-yl diphosphate synthase (flavodoxin)</fullName>
        <ecNumber evidence="1">1.17.7.3</ecNumber>
    </recommendedName>
    <alternativeName>
        <fullName evidence="1">1-hydroxy-2-methyl-2-(E)-butenyl 4-diphosphate synthase</fullName>
    </alternativeName>
</protein>
<dbReference type="EC" id="1.17.7.3" evidence="1"/>
<dbReference type="EMBL" id="AE004091">
    <property type="protein sequence ID" value="AAG07190.1"/>
    <property type="molecule type" value="Genomic_DNA"/>
</dbReference>
<dbReference type="PIR" id="F83171">
    <property type="entry name" value="F83171"/>
</dbReference>
<dbReference type="RefSeq" id="WP_003092800.1">
    <property type="nucleotide sequence ID" value="NZ_QZGE01000001.1"/>
</dbReference>
<dbReference type="SMR" id="Q9HXJ4"/>
<dbReference type="FunCoup" id="Q9HXJ4">
    <property type="interactions" value="377"/>
</dbReference>
<dbReference type="STRING" id="208964.PA3803"/>
<dbReference type="PaxDb" id="208964-PA3803"/>
<dbReference type="KEGG" id="pae:PA3803"/>
<dbReference type="PATRIC" id="fig|208964.12.peg.3982"/>
<dbReference type="PseudoCAP" id="PA3803"/>
<dbReference type="HOGENOM" id="CLU_042258_0_0_6"/>
<dbReference type="InParanoid" id="Q9HXJ4"/>
<dbReference type="OrthoDB" id="9803214at2"/>
<dbReference type="PhylomeDB" id="Q9HXJ4"/>
<dbReference type="BioCyc" id="PAER208964:G1FZ6-3874-MONOMER"/>
<dbReference type="UniPathway" id="UPA00056">
    <property type="reaction ID" value="UER00096"/>
</dbReference>
<dbReference type="Proteomes" id="UP000002438">
    <property type="component" value="Chromosome"/>
</dbReference>
<dbReference type="GO" id="GO:0051539">
    <property type="term" value="F:4 iron, 4 sulfur cluster binding"/>
    <property type="evidence" value="ECO:0007669"/>
    <property type="project" value="UniProtKB-UniRule"/>
</dbReference>
<dbReference type="GO" id="GO:0046429">
    <property type="term" value="F:4-hydroxy-3-methylbut-2-en-1-yl diphosphate synthase activity (ferredoxin)"/>
    <property type="evidence" value="ECO:0000318"/>
    <property type="project" value="GO_Central"/>
</dbReference>
<dbReference type="GO" id="GO:0141197">
    <property type="term" value="F:4-hydroxy-3-methylbut-2-enyl-diphosphate synthase activity (flavodoxin)"/>
    <property type="evidence" value="ECO:0007669"/>
    <property type="project" value="UniProtKB-EC"/>
</dbReference>
<dbReference type="GO" id="GO:0005506">
    <property type="term" value="F:iron ion binding"/>
    <property type="evidence" value="ECO:0007669"/>
    <property type="project" value="InterPro"/>
</dbReference>
<dbReference type="GO" id="GO:0019288">
    <property type="term" value="P:isopentenyl diphosphate biosynthetic process, methylerythritol 4-phosphate pathway"/>
    <property type="evidence" value="ECO:0000318"/>
    <property type="project" value="GO_Central"/>
</dbReference>
<dbReference type="GO" id="GO:0016114">
    <property type="term" value="P:terpenoid biosynthetic process"/>
    <property type="evidence" value="ECO:0007669"/>
    <property type="project" value="InterPro"/>
</dbReference>
<dbReference type="FunFam" id="3.20.20.20:FF:000001">
    <property type="entry name" value="4-hydroxy-3-methylbut-2-en-1-yl diphosphate synthase (flavodoxin)"/>
    <property type="match status" value="1"/>
</dbReference>
<dbReference type="Gene3D" id="3.20.20.20">
    <property type="entry name" value="Dihydropteroate synthase-like"/>
    <property type="match status" value="1"/>
</dbReference>
<dbReference type="Gene3D" id="3.30.413.10">
    <property type="entry name" value="Sulfite Reductase Hemoprotein, domain 1"/>
    <property type="match status" value="1"/>
</dbReference>
<dbReference type="HAMAP" id="MF_00159">
    <property type="entry name" value="IspG"/>
    <property type="match status" value="1"/>
</dbReference>
<dbReference type="InterPro" id="IPR011005">
    <property type="entry name" value="Dihydropteroate_synth-like_sf"/>
</dbReference>
<dbReference type="InterPro" id="IPR016425">
    <property type="entry name" value="IspG_bac"/>
</dbReference>
<dbReference type="InterPro" id="IPR004588">
    <property type="entry name" value="IspG_bac-typ"/>
</dbReference>
<dbReference type="InterPro" id="IPR045854">
    <property type="entry name" value="NO2/SO3_Rdtase_4Fe4S_sf"/>
</dbReference>
<dbReference type="NCBIfam" id="TIGR00612">
    <property type="entry name" value="ispG_gcpE"/>
    <property type="match status" value="1"/>
</dbReference>
<dbReference type="NCBIfam" id="NF001540">
    <property type="entry name" value="PRK00366.1"/>
    <property type="match status" value="1"/>
</dbReference>
<dbReference type="PANTHER" id="PTHR30454">
    <property type="entry name" value="4-HYDROXY-3-METHYLBUT-2-EN-1-YL DIPHOSPHATE SYNTHASE"/>
    <property type="match status" value="1"/>
</dbReference>
<dbReference type="PANTHER" id="PTHR30454:SF0">
    <property type="entry name" value="4-HYDROXY-3-METHYLBUT-2-EN-1-YL DIPHOSPHATE SYNTHASE (FERREDOXIN), CHLOROPLASTIC"/>
    <property type="match status" value="1"/>
</dbReference>
<dbReference type="Pfam" id="PF04551">
    <property type="entry name" value="GcpE"/>
    <property type="match status" value="1"/>
</dbReference>
<dbReference type="PIRSF" id="PIRSF004640">
    <property type="entry name" value="IspG"/>
    <property type="match status" value="1"/>
</dbReference>
<dbReference type="SUPFAM" id="SSF51717">
    <property type="entry name" value="Dihydropteroate synthetase-like"/>
    <property type="match status" value="1"/>
</dbReference>
<dbReference type="SUPFAM" id="SSF56014">
    <property type="entry name" value="Nitrite and sulphite reductase 4Fe-4S domain-like"/>
    <property type="match status" value="1"/>
</dbReference>
<evidence type="ECO:0000255" key="1">
    <source>
        <dbReference type="HAMAP-Rule" id="MF_00159"/>
    </source>
</evidence>
<sequence>MSIHSASPIIRRKSRKIWVGNVPVGGDAPIAVQSMTNTETCDVAATVAQIRRLEDAGADIVRVSVPDMDAAEAFGKIKQQVNVPLVADIHFDYRIALRVAELGVDCLRINPGNIGREDRVKAVVDAARERNIPIRIGVNAGSLEKDLQKKYGEPTPEALLESAMRHVDHLDKLDFQNFKVSVKASDVFMAVAAYRLLARQIEQPLHLGITEAGGLRSGTVKSAVGLGMLLAEGIGDTIRISLAADPVEEIKVGFDILKSLHLRSRGINFIACPSCSRQNFDVVKTMNELEGRLEDLLVPMDVAVIGCVVNGPGEAKEAHVGLTGGTPNLVYIDGKPSQKLTNDNLVDELERLIRQKAAEKAEADASLIARG</sequence>
<keyword id="KW-0004">4Fe-4S</keyword>
<keyword id="KW-0408">Iron</keyword>
<keyword id="KW-0411">Iron-sulfur</keyword>
<keyword id="KW-0414">Isoprene biosynthesis</keyword>
<keyword id="KW-0479">Metal-binding</keyword>
<keyword id="KW-0560">Oxidoreductase</keyword>
<keyword id="KW-1185">Reference proteome</keyword>
<proteinExistence type="inferred from homology"/>
<organism>
    <name type="scientific">Pseudomonas aeruginosa (strain ATCC 15692 / DSM 22644 / CIP 104116 / JCM 14847 / LMG 12228 / 1C / PRS 101 / PAO1)</name>
    <dbReference type="NCBI Taxonomy" id="208964"/>
    <lineage>
        <taxon>Bacteria</taxon>
        <taxon>Pseudomonadati</taxon>
        <taxon>Pseudomonadota</taxon>
        <taxon>Gammaproteobacteria</taxon>
        <taxon>Pseudomonadales</taxon>
        <taxon>Pseudomonadaceae</taxon>
        <taxon>Pseudomonas</taxon>
    </lineage>
</organism>